<sequence length="199" mass="21260">MTKVKICGLSTKEAVETAVSAGADYIGFVFAPSKRQVTLEEAAVLAKLIPADVKKVGVFVSPSRVELLEAIDKVGLDLVQVHGQVADDLFENLPCASIQAVQVDGNGHVPNSQADYLLFDAPVAGSGQPFDWGQLDTTGLAQPFFIAGGLNEDNVVKAIQHFTPYAVDVSSGVETDGQKDHEKIRRFIERVKHGISGTK</sequence>
<feature type="chain" id="PRO_1000095942" description="N-(5'-phosphoribosyl)anthranilate isomerase">
    <location>
        <begin position="1"/>
        <end position="199"/>
    </location>
</feature>
<keyword id="KW-0028">Amino-acid biosynthesis</keyword>
<keyword id="KW-0057">Aromatic amino acid biosynthesis</keyword>
<keyword id="KW-0413">Isomerase</keyword>
<keyword id="KW-0822">Tryptophan biosynthesis</keyword>
<protein>
    <recommendedName>
        <fullName evidence="1">N-(5'-phosphoribosyl)anthranilate isomerase</fullName>
        <shortName evidence="1">PRAI</shortName>
        <ecNumber evidence="1">5.3.1.24</ecNumber>
    </recommendedName>
</protein>
<gene>
    <name evidence="1" type="primary">trpF</name>
    <name type="ordered locus">SPG_1709</name>
</gene>
<accession>B5E7M4</accession>
<organism>
    <name type="scientific">Streptococcus pneumoniae serotype 19F (strain G54)</name>
    <dbReference type="NCBI Taxonomy" id="512566"/>
    <lineage>
        <taxon>Bacteria</taxon>
        <taxon>Bacillati</taxon>
        <taxon>Bacillota</taxon>
        <taxon>Bacilli</taxon>
        <taxon>Lactobacillales</taxon>
        <taxon>Streptococcaceae</taxon>
        <taxon>Streptococcus</taxon>
    </lineage>
</organism>
<comment type="catalytic activity">
    <reaction evidence="1">
        <text>N-(5-phospho-beta-D-ribosyl)anthranilate = 1-(2-carboxyphenylamino)-1-deoxy-D-ribulose 5-phosphate</text>
        <dbReference type="Rhea" id="RHEA:21540"/>
        <dbReference type="ChEBI" id="CHEBI:18277"/>
        <dbReference type="ChEBI" id="CHEBI:58613"/>
        <dbReference type="EC" id="5.3.1.24"/>
    </reaction>
</comment>
<comment type="pathway">
    <text evidence="1">Amino-acid biosynthesis; L-tryptophan biosynthesis; L-tryptophan from chorismate: step 3/5.</text>
</comment>
<comment type="similarity">
    <text evidence="1">Belongs to the TrpF family.</text>
</comment>
<evidence type="ECO:0000255" key="1">
    <source>
        <dbReference type="HAMAP-Rule" id="MF_00135"/>
    </source>
</evidence>
<dbReference type="EC" id="5.3.1.24" evidence="1"/>
<dbReference type="EMBL" id="CP001015">
    <property type="protein sequence ID" value="ACF56513.1"/>
    <property type="molecule type" value="Genomic_DNA"/>
</dbReference>
<dbReference type="SMR" id="B5E7M4"/>
<dbReference type="KEGG" id="spx:SPG_1709"/>
<dbReference type="HOGENOM" id="CLU_076364_1_0_9"/>
<dbReference type="UniPathway" id="UPA00035">
    <property type="reaction ID" value="UER00042"/>
</dbReference>
<dbReference type="GO" id="GO:0004640">
    <property type="term" value="F:phosphoribosylanthranilate isomerase activity"/>
    <property type="evidence" value="ECO:0007669"/>
    <property type="project" value="UniProtKB-UniRule"/>
</dbReference>
<dbReference type="GO" id="GO:0000162">
    <property type="term" value="P:L-tryptophan biosynthetic process"/>
    <property type="evidence" value="ECO:0007669"/>
    <property type="project" value="UniProtKB-UniRule"/>
</dbReference>
<dbReference type="CDD" id="cd00405">
    <property type="entry name" value="PRAI"/>
    <property type="match status" value="1"/>
</dbReference>
<dbReference type="FunFam" id="3.20.20.70:FF:000075">
    <property type="entry name" value="Tryptophan biosynthesis protein TRP1"/>
    <property type="match status" value="1"/>
</dbReference>
<dbReference type="Gene3D" id="3.20.20.70">
    <property type="entry name" value="Aldolase class I"/>
    <property type="match status" value="1"/>
</dbReference>
<dbReference type="HAMAP" id="MF_00135">
    <property type="entry name" value="PRAI"/>
    <property type="match status" value="1"/>
</dbReference>
<dbReference type="InterPro" id="IPR013785">
    <property type="entry name" value="Aldolase_TIM"/>
</dbReference>
<dbReference type="InterPro" id="IPR001240">
    <property type="entry name" value="PRAI_dom"/>
</dbReference>
<dbReference type="InterPro" id="IPR011060">
    <property type="entry name" value="RibuloseP-bd_barrel"/>
</dbReference>
<dbReference type="InterPro" id="IPR044643">
    <property type="entry name" value="TrpF_fam"/>
</dbReference>
<dbReference type="NCBIfam" id="NF002300">
    <property type="entry name" value="PRK01222.1-7"/>
    <property type="match status" value="1"/>
</dbReference>
<dbReference type="PANTHER" id="PTHR42894">
    <property type="entry name" value="N-(5'-PHOSPHORIBOSYL)ANTHRANILATE ISOMERASE"/>
    <property type="match status" value="1"/>
</dbReference>
<dbReference type="PANTHER" id="PTHR42894:SF1">
    <property type="entry name" value="N-(5'-PHOSPHORIBOSYL)ANTHRANILATE ISOMERASE"/>
    <property type="match status" value="1"/>
</dbReference>
<dbReference type="Pfam" id="PF00697">
    <property type="entry name" value="PRAI"/>
    <property type="match status" value="1"/>
</dbReference>
<dbReference type="SUPFAM" id="SSF51366">
    <property type="entry name" value="Ribulose-phoshate binding barrel"/>
    <property type="match status" value="1"/>
</dbReference>
<name>TRPF_STRP4</name>
<reference key="1">
    <citation type="journal article" date="2001" name="Microb. Drug Resist.">
        <title>Annotated draft genomic sequence from a Streptococcus pneumoniae type 19F clinical isolate.</title>
        <authorList>
            <person name="Dopazo J."/>
            <person name="Mendoza A."/>
            <person name="Herrero J."/>
            <person name="Caldara F."/>
            <person name="Humbert Y."/>
            <person name="Friedli L."/>
            <person name="Guerrier M."/>
            <person name="Grand-Schenk E."/>
            <person name="Gandin C."/>
            <person name="de Francesco M."/>
            <person name="Polissi A."/>
            <person name="Buell G."/>
            <person name="Feger G."/>
            <person name="Garcia E."/>
            <person name="Peitsch M."/>
            <person name="Garcia-Bustos J.F."/>
        </authorList>
    </citation>
    <scope>NUCLEOTIDE SEQUENCE [LARGE SCALE GENOMIC DNA]</scope>
    <source>
        <strain>G54</strain>
    </source>
</reference>
<reference key="2">
    <citation type="submission" date="2008-03" db="EMBL/GenBank/DDBJ databases">
        <title>Pneumococcal beta glucoside metabolism investigated by whole genome comparison.</title>
        <authorList>
            <person name="Mulas L."/>
            <person name="Trappetti C."/>
            <person name="Hakenbeck R."/>
            <person name="Iannelli F."/>
            <person name="Pozzi G."/>
            <person name="Davidsen T.M."/>
            <person name="Tettelin H."/>
            <person name="Oggioni M."/>
        </authorList>
    </citation>
    <scope>NUCLEOTIDE SEQUENCE [LARGE SCALE GENOMIC DNA]</scope>
    <source>
        <strain>G54</strain>
    </source>
</reference>
<proteinExistence type="inferred from homology"/>